<sequence>MTQHSSAQNAVDLYTDGACSGNPGPGGWGVVLRYGHHEREMYGGETATTNNKMELTAVIEGLAALTRPVPLVRIHTDSTYVLKGITEWMRGWKRNGWLTSAKQPVKNADLWRRLDQECGRHGEITWEWVKGHAGHPENERADKLACKGRDEAKKS</sequence>
<protein>
    <recommendedName>
        <fullName evidence="1">Ribonuclease H</fullName>
        <shortName evidence="1">RNase H</shortName>
        <ecNumber evidence="1">3.1.26.4</ecNumber>
    </recommendedName>
</protein>
<gene>
    <name evidence="1" type="primary">rnhA</name>
    <name type="ordered locus">SACE_6195</name>
</gene>
<proteinExistence type="inferred from homology"/>
<name>RNH_SACEN</name>
<comment type="function">
    <text evidence="1">Endonuclease that specifically degrades the RNA of RNA-DNA hybrids.</text>
</comment>
<comment type="catalytic activity">
    <reaction evidence="1">
        <text>Endonucleolytic cleavage to 5'-phosphomonoester.</text>
        <dbReference type="EC" id="3.1.26.4"/>
    </reaction>
</comment>
<comment type="cofactor">
    <cofactor evidence="1">
        <name>Mg(2+)</name>
        <dbReference type="ChEBI" id="CHEBI:18420"/>
    </cofactor>
    <text evidence="1">Binds 1 Mg(2+) ion per subunit. May bind a second metal ion at a regulatory site, or after substrate binding.</text>
</comment>
<comment type="subunit">
    <text evidence="1">Monomer.</text>
</comment>
<comment type="subcellular location">
    <subcellularLocation>
        <location evidence="1">Cytoplasm</location>
    </subcellularLocation>
</comment>
<comment type="similarity">
    <text evidence="1">Belongs to the RNase H family.</text>
</comment>
<evidence type="ECO:0000255" key="1">
    <source>
        <dbReference type="HAMAP-Rule" id="MF_00042"/>
    </source>
</evidence>
<evidence type="ECO:0000255" key="2">
    <source>
        <dbReference type="PROSITE-ProRule" id="PRU00408"/>
    </source>
</evidence>
<reference key="1">
    <citation type="journal article" date="2007" name="Nat. Biotechnol.">
        <title>Complete genome sequence of the erythromycin-producing bacterium Saccharopolyspora erythraea NRRL23338.</title>
        <authorList>
            <person name="Oliynyk M."/>
            <person name="Samborskyy M."/>
            <person name="Lester J.B."/>
            <person name="Mironenko T."/>
            <person name="Scott N."/>
            <person name="Dickens S."/>
            <person name="Haydock S.F."/>
            <person name="Leadlay P.F."/>
        </authorList>
    </citation>
    <scope>NUCLEOTIDE SEQUENCE [LARGE SCALE GENOMIC DNA]</scope>
    <source>
        <strain>ATCC 11635 / DSM 40517 / JCM 4748 / NBRC 13426 / NCIMB 8594 / NRRL 2338</strain>
    </source>
</reference>
<dbReference type="EC" id="3.1.26.4" evidence="1"/>
<dbReference type="EMBL" id="AM420293">
    <property type="protein sequence ID" value="CAM05368.1"/>
    <property type="molecule type" value="Genomic_DNA"/>
</dbReference>
<dbReference type="RefSeq" id="WP_009944360.1">
    <property type="nucleotide sequence ID" value="NC_009142.1"/>
</dbReference>
<dbReference type="SMR" id="A4FMU3"/>
<dbReference type="STRING" id="405948.SACE_6195"/>
<dbReference type="KEGG" id="sen:SACE_6195"/>
<dbReference type="eggNOG" id="COG0328">
    <property type="taxonomic scope" value="Bacteria"/>
</dbReference>
<dbReference type="HOGENOM" id="CLU_030894_6_0_11"/>
<dbReference type="OrthoDB" id="7845843at2"/>
<dbReference type="Proteomes" id="UP000006728">
    <property type="component" value="Chromosome"/>
</dbReference>
<dbReference type="GO" id="GO:0005737">
    <property type="term" value="C:cytoplasm"/>
    <property type="evidence" value="ECO:0007669"/>
    <property type="project" value="UniProtKB-SubCell"/>
</dbReference>
<dbReference type="GO" id="GO:0000287">
    <property type="term" value="F:magnesium ion binding"/>
    <property type="evidence" value="ECO:0007669"/>
    <property type="project" value="UniProtKB-UniRule"/>
</dbReference>
<dbReference type="GO" id="GO:0003676">
    <property type="term" value="F:nucleic acid binding"/>
    <property type="evidence" value="ECO:0007669"/>
    <property type="project" value="InterPro"/>
</dbReference>
<dbReference type="GO" id="GO:0004523">
    <property type="term" value="F:RNA-DNA hybrid ribonuclease activity"/>
    <property type="evidence" value="ECO:0007669"/>
    <property type="project" value="UniProtKB-UniRule"/>
</dbReference>
<dbReference type="GO" id="GO:0043137">
    <property type="term" value="P:DNA replication, removal of RNA primer"/>
    <property type="evidence" value="ECO:0007669"/>
    <property type="project" value="TreeGrafter"/>
</dbReference>
<dbReference type="CDD" id="cd09278">
    <property type="entry name" value="RNase_HI_prokaryote_like"/>
    <property type="match status" value="1"/>
</dbReference>
<dbReference type="FunFam" id="3.30.420.10:FF:000089">
    <property type="entry name" value="Ribonuclease H"/>
    <property type="match status" value="1"/>
</dbReference>
<dbReference type="Gene3D" id="3.30.420.10">
    <property type="entry name" value="Ribonuclease H-like superfamily/Ribonuclease H"/>
    <property type="match status" value="1"/>
</dbReference>
<dbReference type="HAMAP" id="MF_00042">
    <property type="entry name" value="RNase_H"/>
    <property type="match status" value="1"/>
</dbReference>
<dbReference type="InterPro" id="IPR050092">
    <property type="entry name" value="RNase_H"/>
</dbReference>
<dbReference type="InterPro" id="IPR012337">
    <property type="entry name" value="RNaseH-like_sf"/>
</dbReference>
<dbReference type="InterPro" id="IPR002156">
    <property type="entry name" value="RNaseH_domain"/>
</dbReference>
<dbReference type="InterPro" id="IPR036397">
    <property type="entry name" value="RNaseH_sf"/>
</dbReference>
<dbReference type="InterPro" id="IPR022892">
    <property type="entry name" value="RNaseHI"/>
</dbReference>
<dbReference type="NCBIfam" id="NF001236">
    <property type="entry name" value="PRK00203.1"/>
    <property type="match status" value="1"/>
</dbReference>
<dbReference type="PANTHER" id="PTHR10642">
    <property type="entry name" value="RIBONUCLEASE H1"/>
    <property type="match status" value="1"/>
</dbReference>
<dbReference type="PANTHER" id="PTHR10642:SF26">
    <property type="entry name" value="RIBONUCLEASE H1"/>
    <property type="match status" value="1"/>
</dbReference>
<dbReference type="Pfam" id="PF00075">
    <property type="entry name" value="RNase_H"/>
    <property type="match status" value="1"/>
</dbReference>
<dbReference type="SUPFAM" id="SSF53098">
    <property type="entry name" value="Ribonuclease H-like"/>
    <property type="match status" value="1"/>
</dbReference>
<dbReference type="PROSITE" id="PS50879">
    <property type="entry name" value="RNASE_H_1"/>
    <property type="match status" value="1"/>
</dbReference>
<accession>A4FMU3</accession>
<feature type="chain" id="PRO_0000332673" description="Ribonuclease H">
    <location>
        <begin position="1"/>
        <end position="155"/>
    </location>
</feature>
<feature type="domain" description="RNase H type-1" evidence="2">
    <location>
        <begin position="7"/>
        <end position="150"/>
    </location>
</feature>
<feature type="binding site" evidence="1">
    <location>
        <position position="16"/>
    </location>
    <ligand>
        <name>Mg(2+)</name>
        <dbReference type="ChEBI" id="CHEBI:18420"/>
        <label>1</label>
    </ligand>
</feature>
<feature type="binding site" evidence="1">
    <location>
        <position position="16"/>
    </location>
    <ligand>
        <name>Mg(2+)</name>
        <dbReference type="ChEBI" id="CHEBI:18420"/>
        <label>2</label>
    </ligand>
</feature>
<feature type="binding site" evidence="1">
    <location>
        <position position="54"/>
    </location>
    <ligand>
        <name>Mg(2+)</name>
        <dbReference type="ChEBI" id="CHEBI:18420"/>
        <label>1</label>
    </ligand>
</feature>
<feature type="binding site" evidence="1">
    <location>
        <position position="77"/>
    </location>
    <ligand>
        <name>Mg(2+)</name>
        <dbReference type="ChEBI" id="CHEBI:18420"/>
        <label>1</label>
    </ligand>
</feature>
<feature type="binding site" evidence="1">
    <location>
        <position position="142"/>
    </location>
    <ligand>
        <name>Mg(2+)</name>
        <dbReference type="ChEBI" id="CHEBI:18420"/>
        <label>2</label>
    </ligand>
</feature>
<organism>
    <name type="scientific">Saccharopolyspora erythraea (strain ATCC 11635 / DSM 40517 / JCM 4748 / NBRC 13426 / NCIMB 8594 / NRRL 2338)</name>
    <dbReference type="NCBI Taxonomy" id="405948"/>
    <lineage>
        <taxon>Bacteria</taxon>
        <taxon>Bacillati</taxon>
        <taxon>Actinomycetota</taxon>
        <taxon>Actinomycetes</taxon>
        <taxon>Pseudonocardiales</taxon>
        <taxon>Pseudonocardiaceae</taxon>
        <taxon>Saccharopolyspora</taxon>
    </lineage>
</organism>
<keyword id="KW-0963">Cytoplasm</keyword>
<keyword id="KW-0255">Endonuclease</keyword>
<keyword id="KW-0378">Hydrolase</keyword>
<keyword id="KW-0460">Magnesium</keyword>
<keyword id="KW-0479">Metal-binding</keyword>
<keyword id="KW-0540">Nuclease</keyword>
<keyword id="KW-1185">Reference proteome</keyword>